<name>HAIR_DROVI</name>
<organism>
    <name type="scientific">Drosophila virilis</name>
    <name type="common">Fruit fly</name>
    <dbReference type="NCBI Taxonomy" id="7244"/>
    <lineage>
        <taxon>Eukaryota</taxon>
        <taxon>Metazoa</taxon>
        <taxon>Ecdysozoa</taxon>
        <taxon>Arthropoda</taxon>
        <taxon>Hexapoda</taxon>
        <taxon>Insecta</taxon>
        <taxon>Pterygota</taxon>
        <taxon>Neoptera</taxon>
        <taxon>Endopterygota</taxon>
        <taxon>Diptera</taxon>
        <taxon>Brachycera</taxon>
        <taxon>Muscomorpha</taxon>
        <taxon>Ephydroidea</taxon>
        <taxon>Drosophilidae</taxon>
        <taxon>Drosophila</taxon>
    </lineage>
</organism>
<gene>
    <name evidence="1" type="primary">hry</name>
    <name evidence="7" type="synonym">h</name>
</gene>
<reference key="1">
    <citation type="journal article" date="1992" name="Mol. Cell. Biol.">
        <title>Point mutations in the Drosophila hairy gene demonstrate in vivo requirements for basic, helix-loop-helix, and WRPW domains.</title>
        <authorList>
            <person name="Wainwright S.M."/>
            <person name="Ish-Horowicz D."/>
        </authorList>
    </citation>
    <scope>NUCLEOTIDE SEQUENCE [MRNA]</scope>
    <scope>WRPW MOTIF</scope>
</reference>
<reference key="2">
    <citation type="journal article" date="2007" name="Nature">
        <title>Evolution of genes and genomes on the Drosophila phylogeny.</title>
        <authorList>
            <consortium name="Drosophila 12 genomes consortium"/>
        </authorList>
    </citation>
    <scope>NUCLEOTIDE SEQUENCE [LARGE SCALE GENOMIC DNA]</scope>
    <source>
        <strain>Tucson 15010-1051.87</strain>
    </source>
</reference>
<keyword id="KW-0217">Developmental protein</keyword>
<keyword id="KW-0238">DNA-binding</keyword>
<keyword id="KW-0539">Nucleus</keyword>
<keyword id="KW-0562">Pair-rule protein</keyword>
<keyword id="KW-1185">Reference proteome</keyword>
<keyword id="KW-0678">Repressor</keyword>
<keyword id="KW-0804">Transcription</keyword>
<keyword id="KW-0805">Transcription regulation</keyword>
<comment type="function">
    <text evidence="1">Pair-rule protein that regulates embryonic segmentation and adult bristle patterning. Transcriptional repressor of genes that require a bHLH protein for their transcription (e.g. ftz).</text>
</comment>
<comment type="subunit">
    <text evidence="1">Transcription repression requires formation of a complex with a corepressor protein (Groucho).</text>
</comment>
<comment type="subcellular location">
    <subcellularLocation>
        <location evidence="3 4">Nucleus</location>
    </subcellularLocation>
</comment>
<comment type="domain">
    <text evidence="2">Has a particular type of basic domain (presence of a helix-interrupting proline) that binds to the N-box (CACNAG), rather than the canonical E-box (CANNTG).</text>
</comment>
<comment type="domain">
    <text evidence="1">The C-terminal WRPW motif is a transcriptional repression domain necessary for the interaction with Groucho, a transcriptional corepressor recruited to specific target DNA by Hairy-related proteins.</text>
</comment>
<proteinExistence type="evidence at transcript level"/>
<protein>
    <recommendedName>
        <fullName evidence="7">Protein hairy</fullName>
    </recommendedName>
</protein>
<accession>P29303</accession>
<accession>B4LEM2</accession>
<feature type="chain" id="PRO_0000127183" description="Protein hairy">
    <location>
        <begin position="1"/>
        <end position="379"/>
    </location>
</feature>
<feature type="domain" description="bHLH" evidence="4">
    <location>
        <begin position="38"/>
        <end position="95"/>
    </location>
</feature>
<feature type="domain" description="Orange" evidence="3">
    <location>
        <begin position="114"/>
        <end position="143"/>
    </location>
</feature>
<feature type="region of interest" description="Disordered" evidence="5">
    <location>
        <begin position="20"/>
        <end position="50"/>
    </location>
</feature>
<feature type="region of interest" description="Interaction with Topors" evidence="1">
    <location>
        <begin position="36"/>
        <end position="55"/>
    </location>
</feature>
<feature type="region of interest" description="Disordered" evidence="5">
    <location>
        <begin position="167"/>
        <end position="208"/>
    </location>
</feature>
<feature type="region of interest" description="Disordered" evidence="5">
    <location>
        <begin position="298"/>
        <end position="345"/>
    </location>
</feature>
<feature type="short sequence motif" description="WRPW motif" evidence="6">
    <location>
        <begin position="376"/>
        <end position="379"/>
    </location>
</feature>
<feature type="compositionally biased region" description="Basic and acidic residues" evidence="5">
    <location>
        <begin position="29"/>
        <end position="47"/>
    </location>
</feature>
<feature type="compositionally biased region" description="Low complexity" evidence="5">
    <location>
        <begin position="182"/>
        <end position="207"/>
    </location>
</feature>
<feature type="compositionally biased region" description="Low complexity" evidence="5">
    <location>
        <begin position="301"/>
        <end position="328"/>
    </location>
</feature>
<feature type="sequence conflict" description="In Ref. 1; AAA28602." evidence="8" ref="1">
    <location>
        <position position="29"/>
    </location>
</feature>
<dbReference type="EMBL" id="M87885">
    <property type="protein sequence ID" value="AAA28602.1"/>
    <property type="molecule type" value="mRNA"/>
</dbReference>
<dbReference type="EMBL" id="CH940647">
    <property type="protein sequence ID" value="EDW69107.1"/>
    <property type="molecule type" value="Genomic_DNA"/>
</dbReference>
<dbReference type="PIR" id="A44443">
    <property type="entry name" value="A44443"/>
</dbReference>
<dbReference type="RefSeq" id="XP_002046765.1">
    <property type="nucleotide sequence ID" value="XM_002046729.4"/>
</dbReference>
<dbReference type="SMR" id="P29303"/>
<dbReference type="ELM" id="P29303"/>
<dbReference type="FunCoup" id="P29303">
    <property type="interactions" value="134"/>
</dbReference>
<dbReference type="STRING" id="7244.P29303"/>
<dbReference type="EnsemblMetazoa" id="FBtr0228989">
    <property type="protein sequence ID" value="FBpp0227481"/>
    <property type="gene ID" value="FBgn0013115"/>
</dbReference>
<dbReference type="EnsemblMetazoa" id="XM_002046729.3">
    <property type="protein sequence ID" value="XP_002046765.1"/>
    <property type="gene ID" value="LOC6623507"/>
</dbReference>
<dbReference type="GeneID" id="6623507"/>
<dbReference type="KEGG" id="dvi:6623507"/>
<dbReference type="CTD" id="38995"/>
<dbReference type="eggNOG" id="KOG4304">
    <property type="taxonomic scope" value="Eukaryota"/>
</dbReference>
<dbReference type="HOGENOM" id="CLU_068550_2_1_1"/>
<dbReference type="InParanoid" id="P29303"/>
<dbReference type="OMA" id="PANSVYE"/>
<dbReference type="OrthoDB" id="6085656at2759"/>
<dbReference type="ChiTaRS" id="h">
    <property type="organism name" value="fly"/>
</dbReference>
<dbReference type="Proteomes" id="UP000008792">
    <property type="component" value="Unassembled WGS sequence"/>
</dbReference>
<dbReference type="GO" id="GO:0005634">
    <property type="term" value="C:nucleus"/>
    <property type="evidence" value="ECO:0007669"/>
    <property type="project" value="UniProtKB-SubCell"/>
</dbReference>
<dbReference type="GO" id="GO:0001227">
    <property type="term" value="F:DNA-binding transcription repressor activity, RNA polymerase II-specific"/>
    <property type="evidence" value="ECO:0007669"/>
    <property type="project" value="EnsemblMetazoa"/>
</dbReference>
<dbReference type="GO" id="GO:0070888">
    <property type="term" value="F:E-box binding"/>
    <property type="evidence" value="ECO:0007669"/>
    <property type="project" value="EnsemblMetazoa"/>
</dbReference>
<dbReference type="GO" id="GO:0046983">
    <property type="term" value="F:protein dimerization activity"/>
    <property type="evidence" value="ECO:0007669"/>
    <property type="project" value="InterPro"/>
</dbReference>
<dbReference type="GO" id="GO:0001222">
    <property type="term" value="F:transcription corepressor binding"/>
    <property type="evidence" value="ECO:0007669"/>
    <property type="project" value="EnsemblMetazoa"/>
</dbReference>
<dbReference type="GO" id="GO:0000902">
    <property type="term" value="P:cell morphogenesis"/>
    <property type="evidence" value="ECO:0007669"/>
    <property type="project" value="EnsemblMetazoa"/>
</dbReference>
<dbReference type="GO" id="GO:0007424">
    <property type="term" value="P:open tracheal system development"/>
    <property type="evidence" value="ECO:0007669"/>
    <property type="project" value="EnsemblMetazoa"/>
</dbReference>
<dbReference type="GO" id="GO:0007366">
    <property type="term" value="P:periodic partitioning by pair rule gene"/>
    <property type="evidence" value="ECO:0007669"/>
    <property type="project" value="UniProtKB-KW"/>
</dbReference>
<dbReference type="GO" id="GO:0001666">
    <property type="term" value="P:response to hypoxia"/>
    <property type="evidence" value="ECO:0007669"/>
    <property type="project" value="EnsemblMetazoa"/>
</dbReference>
<dbReference type="GO" id="GO:0007435">
    <property type="term" value="P:salivary gland morphogenesis"/>
    <property type="evidence" value="ECO:0007669"/>
    <property type="project" value="EnsemblMetazoa"/>
</dbReference>
<dbReference type="GO" id="GO:0035239">
    <property type="term" value="P:tube morphogenesis"/>
    <property type="evidence" value="ECO:0007669"/>
    <property type="project" value="EnsemblMetazoa"/>
</dbReference>
<dbReference type="CDD" id="cd18913">
    <property type="entry name" value="bHLH-O_hairy_like"/>
    <property type="match status" value="1"/>
</dbReference>
<dbReference type="FunFam" id="4.10.280.10:FF:000009">
    <property type="entry name" value="Transcription factor HES-1"/>
    <property type="match status" value="1"/>
</dbReference>
<dbReference type="Gene3D" id="6.10.250.980">
    <property type="match status" value="1"/>
</dbReference>
<dbReference type="Gene3D" id="4.10.280.10">
    <property type="entry name" value="Helix-loop-helix DNA-binding domain"/>
    <property type="match status" value="1"/>
</dbReference>
<dbReference type="InterPro" id="IPR011598">
    <property type="entry name" value="bHLH_dom"/>
</dbReference>
<dbReference type="InterPro" id="IPR050370">
    <property type="entry name" value="HES_HEY"/>
</dbReference>
<dbReference type="InterPro" id="IPR036638">
    <property type="entry name" value="HLH_DNA-bd_sf"/>
</dbReference>
<dbReference type="InterPro" id="IPR003650">
    <property type="entry name" value="Orange_dom"/>
</dbReference>
<dbReference type="PANTHER" id="PTHR10985">
    <property type="entry name" value="BASIC HELIX-LOOP-HELIX TRANSCRIPTION FACTOR, HES-RELATED"/>
    <property type="match status" value="1"/>
</dbReference>
<dbReference type="Pfam" id="PF07527">
    <property type="entry name" value="Hairy_orange"/>
    <property type="match status" value="1"/>
</dbReference>
<dbReference type="Pfam" id="PF00010">
    <property type="entry name" value="HLH"/>
    <property type="match status" value="1"/>
</dbReference>
<dbReference type="SMART" id="SM00353">
    <property type="entry name" value="HLH"/>
    <property type="match status" value="1"/>
</dbReference>
<dbReference type="SMART" id="SM00511">
    <property type="entry name" value="ORANGE"/>
    <property type="match status" value="1"/>
</dbReference>
<dbReference type="SUPFAM" id="SSF47459">
    <property type="entry name" value="HLH, helix-loop-helix DNA-binding domain"/>
    <property type="match status" value="1"/>
</dbReference>
<dbReference type="SUPFAM" id="SSF158457">
    <property type="entry name" value="Orange domain-like"/>
    <property type="match status" value="1"/>
</dbReference>
<dbReference type="PROSITE" id="PS50888">
    <property type="entry name" value="BHLH"/>
    <property type="match status" value="1"/>
</dbReference>
<dbReference type="PROSITE" id="PS51054">
    <property type="entry name" value="ORANGE"/>
    <property type="match status" value="1"/>
</dbReference>
<sequence>MVTGITTTMSPNVLGTAVVSTQQQQQQQQHKEAPIKSDRRSNKPIMEKRRRARINNCLNELKTLILDATKKDPARHSKLEKADILEKTVKHLQELQRQQAAMQQAADPKIINKFKAGFADCANEVSRFPGLDSTQRRRLLQHLSNCINGVKTELHHQQRQQALAQAQSLHAQVVLPSPPSSPEQEPSVTPVAASGNNNSSSNNTNTTAPYLFGQIQQNANGYFLPNGMQVIPTKLPNGSIALVLPQSLPQQQQQQLLQQHQHHQQQQQLAAAAAAAAAAAAAVAQQHQQSPLLVAMPQRTASTGSASSHSSAGYESAPSSSSSRGSYAPPSPANSAYEPMDVKPSVIQRVPHMHLEQQPLSLVIKKQIKVEEEQPWRPW</sequence>
<evidence type="ECO:0000250" key="1">
    <source>
        <dbReference type="UniProtKB" id="P14003"/>
    </source>
</evidence>
<evidence type="ECO:0000250" key="2">
    <source>
        <dbReference type="UniProtKB" id="Q26263"/>
    </source>
</evidence>
<evidence type="ECO:0000255" key="3">
    <source>
        <dbReference type="PROSITE-ProRule" id="PRU00380"/>
    </source>
</evidence>
<evidence type="ECO:0000255" key="4">
    <source>
        <dbReference type="PROSITE-ProRule" id="PRU00981"/>
    </source>
</evidence>
<evidence type="ECO:0000256" key="5">
    <source>
        <dbReference type="SAM" id="MobiDB-lite"/>
    </source>
</evidence>
<evidence type="ECO:0000269" key="6">
    <source>
    </source>
</evidence>
<evidence type="ECO:0000303" key="7">
    <source>
    </source>
</evidence>
<evidence type="ECO:0000305" key="8"/>